<organism>
    <name type="scientific">Penaeus monodon</name>
    <name type="common">Giant tiger prawn</name>
    <dbReference type="NCBI Taxonomy" id="6687"/>
    <lineage>
        <taxon>Eukaryota</taxon>
        <taxon>Metazoa</taxon>
        <taxon>Ecdysozoa</taxon>
        <taxon>Arthropoda</taxon>
        <taxon>Crustacea</taxon>
        <taxon>Multicrustacea</taxon>
        <taxon>Malacostraca</taxon>
        <taxon>Eumalacostraca</taxon>
        <taxon>Eucarida</taxon>
        <taxon>Decapoda</taxon>
        <taxon>Dendrobranchiata</taxon>
        <taxon>Penaeoidea</taxon>
        <taxon>Penaeidae</taxon>
        <taxon>Penaeus</taxon>
    </lineage>
</organism>
<keyword id="KW-0027">Amidation</keyword>
<keyword id="KW-0119">Carbohydrate metabolism</keyword>
<keyword id="KW-0165">Cleavage on pair of basic residues</keyword>
<keyword id="KW-1015">Disulfide bond</keyword>
<keyword id="KW-0313">Glucose metabolism</keyword>
<keyword id="KW-0372">Hormone</keyword>
<keyword id="KW-0527">Neuropeptide</keyword>
<keyword id="KW-0964">Secreted</keyword>
<keyword id="KW-0732">Signal</keyword>
<proteinExistence type="evidence at transcript level"/>
<accession>O97387</accession>
<evidence type="ECO:0000250" key="1"/>
<evidence type="ECO:0000255" key="2"/>
<evidence type="ECO:0000305" key="3"/>
<gene>
    <name type="primary">CHH5</name>
</gene>
<name>CHH5_PENMO</name>
<sequence length="122" mass="13351">MSLGLIASRLVAVALVVVVACSTTWARSLEGSSSPVASLIRGRSLSKRANFDPSCAGVYDRELLGGLSRLCDDCYNVFREPKVATECRSNCFYNSVFVQCLEYLIPADLHEEYQAHVQTVGK</sequence>
<feature type="signal peptide" evidence="2">
    <location>
        <begin position="1"/>
        <end position="26"/>
    </location>
</feature>
<feature type="peptide" id="PRO_0000019069" description="CHH precursor-related peptide 5">
    <location>
        <begin position="27"/>
        <end position="46"/>
    </location>
</feature>
<feature type="peptide" id="PRO_0000019070" description="Crustacean hyperglycemic hormone 5">
    <location>
        <begin position="49"/>
        <end position="120"/>
    </location>
</feature>
<feature type="modified residue" description="Valine amide" evidence="1">
    <location>
        <position position="120"/>
    </location>
</feature>
<feature type="disulfide bond" evidence="1">
    <location>
        <begin position="55"/>
        <end position="91"/>
    </location>
</feature>
<feature type="disulfide bond" evidence="1">
    <location>
        <begin position="71"/>
        <end position="87"/>
    </location>
</feature>
<feature type="disulfide bond" evidence="1">
    <location>
        <begin position="74"/>
        <end position="100"/>
    </location>
</feature>
<comment type="function">
    <text evidence="1">Hormone found in the sinus gland of isopods and decapods which controls the blood sugar level. Has a secretagogue action over the amylase released from the midgut gland. May act as a stress hormone and may be involved in the control of molting and reproduction (By similarity).</text>
</comment>
<comment type="subcellular location">
    <subcellularLocation>
        <location>Secreted</location>
    </subcellularLocation>
</comment>
<comment type="similarity">
    <text evidence="3">Belongs to the arthropod CHH/MIH/GIH/VIH hormone family.</text>
</comment>
<reference key="1">
    <citation type="journal article" date="2000" name="Mar. Biotechnol.">
        <title>Five crustacean hyperglycemic family hormones of Penaeus monodon: complementary DNA sequence and identification in single sinus glands by electrospray ionization-Fourier transform mass spectrometry.</title>
        <authorList>
            <person name="Davey M.L."/>
            <person name="Hall M.R."/>
            <person name="Willis R.H."/>
            <person name="Oliver R.W.A."/>
            <person name="Thurn M.J."/>
            <person name="Wilson K.J."/>
        </authorList>
    </citation>
    <scope>NUCLEOTIDE SEQUENCE [MRNA]</scope>
    <source>
        <tissue>Eyestalk</tissue>
    </source>
</reference>
<protein>
    <recommendedName>
        <fullName>Crustacean hyperglycemic hormones 5</fullName>
    </recommendedName>
    <alternativeName>
        <fullName>Pm-SGP-V</fullName>
    </alternativeName>
    <component>
        <recommendedName>
            <fullName>CHH precursor-related peptide 5</fullName>
            <shortName>CPRP 5</shortName>
        </recommendedName>
    </component>
    <component>
        <recommendedName>
            <fullName>Crustacean hyperglycemic hormone 5</fullName>
            <shortName>CHH 5</shortName>
        </recommendedName>
    </component>
</protein>
<dbReference type="EMBL" id="AF104390">
    <property type="protein sequence ID" value="AAC84146.1"/>
    <property type="molecule type" value="mRNA"/>
</dbReference>
<dbReference type="SMR" id="O97387"/>
<dbReference type="OrthoDB" id="6330469at2759"/>
<dbReference type="GO" id="GO:0005576">
    <property type="term" value="C:extracellular region"/>
    <property type="evidence" value="ECO:0007669"/>
    <property type="project" value="UniProtKB-SubCell"/>
</dbReference>
<dbReference type="GO" id="GO:0005184">
    <property type="term" value="F:neuropeptide hormone activity"/>
    <property type="evidence" value="ECO:0007669"/>
    <property type="project" value="InterPro"/>
</dbReference>
<dbReference type="GO" id="GO:0007623">
    <property type="term" value="P:circadian rhythm"/>
    <property type="evidence" value="ECO:0007669"/>
    <property type="project" value="TreeGrafter"/>
</dbReference>
<dbReference type="GO" id="GO:0006006">
    <property type="term" value="P:glucose metabolic process"/>
    <property type="evidence" value="ECO:0007669"/>
    <property type="project" value="UniProtKB-KW"/>
</dbReference>
<dbReference type="GO" id="GO:0007218">
    <property type="term" value="P:neuropeptide signaling pathway"/>
    <property type="evidence" value="ECO:0007669"/>
    <property type="project" value="UniProtKB-KW"/>
</dbReference>
<dbReference type="Gene3D" id="1.10.2010.10">
    <property type="entry name" value="Crustacean CHH/MIH/GIH neurohormone"/>
    <property type="match status" value="1"/>
</dbReference>
<dbReference type="InterPro" id="IPR018251">
    <property type="entry name" value="Crust_neurhormone_CS"/>
</dbReference>
<dbReference type="InterPro" id="IPR031098">
    <property type="entry name" value="Crust_neurohorm"/>
</dbReference>
<dbReference type="InterPro" id="IPR035957">
    <property type="entry name" value="Crust_neurohorm_sf"/>
</dbReference>
<dbReference type="InterPro" id="IPR001166">
    <property type="entry name" value="Hyperglycemic"/>
</dbReference>
<dbReference type="InterPro" id="IPR000346">
    <property type="entry name" value="Hyperglycemic1"/>
</dbReference>
<dbReference type="PANTHER" id="PTHR35981">
    <property type="entry name" value="ION TRANSPORT PEPTIDE, ISOFORM C"/>
    <property type="match status" value="1"/>
</dbReference>
<dbReference type="PANTHER" id="PTHR35981:SF2">
    <property type="entry name" value="ION TRANSPORT PEPTIDE, ISOFORM C"/>
    <property type="match status" value="1"/>
</dbReference>
<dbReference type="Pfam" id="PF01147">
    <property type="entry name" value="Crust_neurohorm"/>
    <property type="match status" value="1"/>
</dbReference>
<dbReference type="PRINTS" id="PR00548">
    <property type="entry name" value="HYPRGLYCEMC1"/>
</dbReference>
<dbReference type="PRINTS" id="PR00550">
    <property type="entry name" value="HYPRGLYCEMIC"/>
</dbReference>
<dbReference type="SUPFAM" id="SSF81778">
    <property type="entry name" value="Crustacean CHH/MIH/GIH neurohormone"/>
    <property type="match status" value="1"/>
</dbReference>
<dbReference type="PROSITE" id="PS01250">
    <property type="entry name" value="CHH_MIH_GIH"/>
    <property type="match status" value="1"/>
</dbReference>